<name>RUVC_DICTD</name>
<dbReference type="EC" id="3.1.21.10" evidence="1"/>
<dbReference type="EMBL" id="CP001251">
    <property type="protein sequence ID" value="ACK42887.1"/>
    <property type="molecule type" value="Genomic_DNA"/>
</dbReference>
<dbReference type="RefSeq" id="WP_012583962.1">
    <property type="nucleotide sequence ID" value="NC_011661.1"/>
</dbReference>
<dbReference type="RefSeq" id="YP_002353501.1">
    <property type="nucleotide sequence ID" value="NC_011661.1"/>
</dbReference>
<dbReference type="SMR" id="B8E2P3"/>
<dbReference type="STRING" id="515635.Dtur_1614"/>
<dbReference type="EnsemblBacteria" id="ACK42887">
    <property type="protein sequence ID" value="ACK42887"/>
    <property type="gene ID" value="Dtur_1614"/>
</dbReference>
<dbReference type="KEGG" id="dtu:Dtur_1614"/>
<dbReference type="PATRIC" id="fig|515635.4.peg.1663"/>
<dbReference type="eggNOG" id="COG0817">
    <property type="taxonomic scope" value="Bacteria"/>
</dbReference>
<dbReference type="HOGENOM" id="CLU_091257_3_1_0"/>
<dbReference type="InParanoid" id="B8E2P3"/>
<dbReference type="OrthoDB" id="9805499at2"/>
<dbReference type="Proteomes" id="UP000007719">
    <property type="component" value="Chromosome"/>
</dbReference>
<dbReference type="GO" id="GO:0005737">
    <property type="term" value="C:cytoplasm"/>
    <property type="evidence" value="ECO:0007669"/>
    <property type="project" value="UniProtKB-SubCell"/>
</dbReference>
<dbReference type="GO" id="GO:0048476">
    <property type="term" value="C:Holliday junction resolvase complex"/>
    <property type="evidence" value="ECO:0007669"/>
    <property type="project" value="UniProtKB-UniRule"/>
</dbReference>
<dbReference type="GO" id="GO:0008821">
    <property type="term" value="F:crossover junction DNA endonuclease activity"/>
    <property type="evidence" value="ECO:0007669"/>
    <property type="project" value="UniProtKB-UniRule"/>
</dbReference>
<dbReference type="GO" id="GO:0003677">
    <property type="term" value="F:DNA binding"/>
    <property type="evidence" value="ECO:0007669"/>
    <property type="project" value="UniProtKB-KW"/>
</dbReference>
<dbReference type="GO" id="GO:0000287">
    <property type="term" value="F:magnesium ion binding"/>
    <property type="evidence" value="ECO:0007669"/>
    <property type="project" value="UniProtKB-UniRule"/>
</dbReference>
<dbReference type="GO" id="GO:0006310">
    <property type="term" value="P:DNA recombination"/>
    <property type="evidence" value="ECO:0007669"/>
    <property type="project" value="UniProtKB-UniRule"/>
</dbReference>
<dbReference type="GO" id="GO:0006281">
    <property type="term" value="P:DNA repair"/>
    <property type="evidence" value="ECO:0007669"/>
    <property type="project" value="UniProtKB-UniRule"/>
</dbReference>
<dbReference type="CDD" id="cd16962">
    <property type="entry name" value="RuvC"/>
    <property type="match status" value="1"/>
</dbReference>
<dbReference type="FunFam" id="3.30.420.10:FF:000002">
    <property type="entry name" value="Crossover junction endodeoxyribonuclease RuvC"/>
    <property type="match status" value="1"/>
</dbReference>
<dbReference type="Gene3D" id="3.30.420.10">
    <property type="entry name" value="Ribonuclease H-like superfamily/Ribonuclease H"/>
    <property type="match status" value="1"/>
</dbReference>
<dbReference type="HAMAP" id="MF_00034">
    <property type="entry name" value="RuvC"/>
    <property type="match status" value="1"/>
</dbReference>
<dbReference type="InterPro" id="IPR012337">
    <property type="entry name" value="RNaseH-like_sf"/>
</dbReference>
<dbReference type="InterPro" id="IPR036397">
    <property type="entry name" value="RNaseH_sf"/>
</dbReference>
<dbReference type="InterPro" id="IPR020563">
    <property type="entry name" value="X-over_junc_endoDNase_Mg_BS"/>
</dbReference>
<dbReference type="InterPro" id="IPR002176">
    <property type="entry name" value="X-over_junc_endoDNase_RuvC"/>
</dbReference>
<dbReference type="NCBIfam" id="NF000711">
    <property type="entry name" value="PRK00039.2-1"/>
    <property type="match status" value="1"/>
</dbReference>
<dbReference type="NCBIfam" id="TIGR00228">
    <property type="entry name" value="ruvC"/>
    <property type="match status" value="1"/>
</dbReference>
<dbReference type="PANTHER" id="PTHR30194">
    <property type="entry name" value="CROSSOVER JUNCTION ENDODEOXYRIBONUCLEASE RUVC"/>
    <property type="match status" value="1"/>
</dbReference>
<dbReference type="PANTHER" id="PTHR30194:SF3">
    <property type="entry name" value="CROSSOVER JUNCTION ENDODEOXYRIBONUCLEASE RUVC"/>
    <property type="match status" value="1"/>
</dbReference>
<dbReference type="Pfam" id="PF02075">
    <property type="entry name" value="RuvC"/>
    <property type="match status" value="1"/>
</dbReference>
<dbReference type="PRINTS" id="PR00696">
    <property type="entry name" value="RSOLVASERUVC"/>
</dbReference>
<dbReference type="SUPFAM" id="SSF53098">
    <property type="entry name" value="Ribonuclease H-like"/>
    <property type="match status" value="1"/>
</dbReference>
<dbReference type="PROSITE" id="PS01321">
    <property type="entry name" value="RUVC"/>
    <property type="match status" value="1"/>
</dbReference>
<gene>
    <name evidence="1" type="primary">ruvC</name>
    <name type="ordered locus">Dtur_1614</name>
</gene>
<proteinExistence type="inferred from homology"/>
<reference key="1">
    <citation type="journal article" date="2016" name="Front. Microbiol.">
        <title>The complete genome sequence of hyperthermophile Dictyoglomus turgidum DSM 6724 reveals a specialized carbohydrate fermentor.</title>
        <authorList>
            <person name="Brumm P.J."/>
            <person name="Gowda K."/>
            <person name="Robb F.T."/>
            <person name="Mead D.A."/>
        </authorList>
    </citation>
    <scope>NUCLEOTIDE SEQUENCE [LARGE SCALE GENOMIC DNA]</scope>
    <source>
        <strain>DSM 6724 / Z-1310</strain>
    </source>
</reference>
<evidence type="ECO:0000255" key="1">
    <source>
        <dbReference type="HAMAP-Rule" id="MF_00034"/>
    </source>
</evidence>
<organism>
    <name type="scientific">Dictyoglomus turgidum (strain DSM 6724 / Z-1310)</name>
    <dbReference type="NCBI Taxonomy" id="515635"/>
    <lineage>
        <taxon>Bacteria</taxon>
        <taxon>Pseudomonadati</taxon>
        <taxon>Dictyoglomota</taxon>
        <taxon>Dictyoglomia</taxon>
        <taxon>Dictyoglomales</taxon>
        <taxon>Dictyoglomaceae</taxon>
        <taxon>Dictyoglomus</taxon>
    </lineage>
</organism>
<accession>B8E2P3</accession>
<feature type="chain" id="PRO_1000195249" description="Crossover junction endodeoxyribonuclease RuvC">
    <location>
        <begin position="1"/>
        <end position="158"/>
    </location>
</feature>
<feature type="active site" evidence="1">
    <location>
        <position position="7"/>
    </location>
</feature>
<feature type="active site" evidence="1">
    <location>
        <position position="67"/>
    </location>
</feature>
<feature type="active site" evidence="1">
    <location>
        <position position="140"/>
    </location>
</feature>
<feature type="binding site" evidence="1">
    <location>
        <position position="7"/>
    </location>
    <ligand>
        <name>Mg(2+)</name>
        <dbReference type="ChEBI" id="CHEBI:18420"/>
        <label>1</label>
    </ligand>
</feature>
<feature type="binding site" evidence="1">
    <location>
        <position position="67"/>
    </location>
    <ligand>
        <name>Mg(2+)</name>
        <dbReference type="ChEBI" id="CHEBI:18420"/>
        <label>2</label>
    </ligand>
</feature>
<feature type="binding site" evidence="1">
    <location>
        <position position="140"/>
    </location>
    <ligand>
        <name>Mg(2+)</name>
        <dbReference type="ChEBI" id="CHEBI:18420"/>
        <label>1</label>
    </ligand>
</feature>
<sequence length="158" mass="17337">MVVIGFDPGTAITGYGILNKGEDGISIIEYGALTTPSGWGIGRRLNYLFDQVSSLLDLYNPDVVVMENIFFNKNIKTAINIGQAQGVIILAAEQHQKEISILTPLEVKLSVVGYGRATKNQIQYMVKEILKLKDIPKPDDVADALALCISYIYKQEGC</sequence>
<comment type="function">
    <text evidence="1">The RuvA-RuvB-RuvC complex processes Holliday junction (HJ) DNA during genetic recombination and DNA repair. Endonuclease that resolves HJ intermediates. Cleaves cruciform DNA by making single-stranded nicks across the HJ at symmetrical positions within the homologous arms, yielding a 5'-phosphate and a 3'-hydroxyl group; requires a central core of homology in the junction. The consensus cleavage sequence is 5'-(A/T)TT(C/G)-3'. Cleavage occurs on the 3'-side of the TT dinucleotide at the point of strand exchange. HJ branch migration catalyzed by RuvA-RuvB allows RuvC to scan DNA until it finds its consensus sequence, where it cleaves and resolves the cruciform DNA.</text>
</comment>
<comment type="catalytic activity">
    <reaction evidence="1">
        <text>Endonucleolytic cleavage at a junction such as a reciprocal single-stranded crossover between two homologous DNA duplexes (Holliday junction).</text>
        <dbReference type="EC" id="3.1.21.10"/>
    </reaction>
</comment>
<comment type="cofactor">
    <cofactor evidence="1">
        <name>Mg(2+)</name>
        <dbReference type="ChEBI" id="CHEBI:18420"/>
    </cofactor>
    <text evidence="1">Binds 2 Mg(2+) ion per subunit.</text>
</comment>
<comment type="subunit">
    <text evidence="1">Homodimer which binds Holliday junction (HJ) DNA. The HJ becomes 2-fold symmetrical on binding to RuvC with unstacked arms; it has a different conformation from HJ DNA in complex with RuvA. In the full resolvosome a probable DNA-RuvA(4)-RuvB(12)-RuvC(2) complex forms which resolves the HJ.</text>
</comment>
<comment type="subcellular location">
    <subcellularLocation>
        <location evidence="1">Cytoplasm</location>
    </subcellularLocation>
</comment>
<comment type="similarity">
    <text evidence="1">Belongs to the RuvC family.</text>
</comment>
<keyword id="KW-0963">Cytoplasm</keyword>
<keyword id="KW-0227">DNA damage</keyword>
<keyword id="KW-0233">DNA recombination</keyword>
<keyword id="KW-0234">DNA repair</keyword>
<keyword id="KW-0238">DNA-binding</keyword>
<keyword id="KW-0255">Endonuclease</keyword>
<keyword id="KW-0378">Hydrolase</keyword>
<keyword id="KW-0460">Magnesium</keyword>
<keyword id="KW-0479">Metal-binding</keyword>
<keyword id="KW-0540">Nuclease</keyword>
<keyword id="KW-1185">Reference proteome</keyword>
<protein>
    <recommendedName>
        <fullName evidence="1">Crossover junction endodeoxyribonuclease RuvC</fullName>
        <ecNumber evidence="1">3.1.21.10</ecNumber>
    </recommendedName>
    <alternativeName>
        <fullName evidence="1">Holliday junction nuclease RuvC</fullName>
    </alternativeName>
    <alternativeName>
        <fullName evidence="1">Holliday junction resolvase RuvC</fullName>
    </alternativeName>
</protein>